<comment type="function">
    <text evidence="1">This protein binds to 23S rRNA in the presence of protein L20.</text>
</comment>
<comment type="subunit">
    <text evidence="1">Part of the 50S ribosomal subunit. Contacts protein L20.</text>
</comment>
<comment type="similarity">
    <text evidence="1">Belongs to the bacterial ribosomal protein bL21 family.</text>
</comment>
<reference key="1">
    <citation type="journal article" date="2008" name="PLoS ONE">
        <title>Environmental adaptation: genomic analysis of the piezotolerant and psychrotolerant deep-sea iron reducing bacterium Shewanella piezotolerans WP3.</title>
        <authorList>
            <person name="Wang F."/>
            <person name="Wang J."/>
            <person name="Jian H."/>
            <person name="Zhang B."/>
            <person name="Li S."/>
            <person name="Wang F."/>
            <person name="Zeng X."/>
            <person name="Gao L."/>
            <person name="Bartlett D.H."/>
            <person name="Yu J."/>
            <person name="Hu S."/>
            <person name="Xiao X."/>
        </authorList>
    </citation>
    <scope>NUCLEOTIDE SEQUENCE [LARGE SCALE GENOMIC DNA]</scope>
    <source>
        <strain>WP3 / JCM 13877</strain>
    </source>
</reference>
<feature type="chain" id="PRO_1000143850" description="Large ribosomal subunit protein bL21">
    <location>
        <begin position="1"/>
        <end position="103"/>
    </location>
</feature>
<proteinExistence type="inferred from homology"/>
<protein>
    <recommendedName>
        <fullName evidence="1">Large ribosomal subunit protein bL21</fullName>
    </recommendedName>
    <alternativeName>
        <fullName evidence="2">50S ribosomal protein L21</fullName>
    </alternativeName>
</protein>
<dbReference type="EMBL" id="CP000472">
    <property type="protein sequence ID" value="ACJ30761.1"/>
    <property type="molecule type" value="Genomic_DNA"/>
</dbReference>
<dbReference type="RefSeq" id="WP_020914101.1">
    <property type="nucleotide sequence ID" value="NC_011566.1"/>
</dbReference>
<dbReference type="SMR" id="B8CSY5"/>
<dbReference type="STRING" id="225849.swp_4097"/>
<dbReference type="KEGG" id="swp:swp_4097"/>
<dbReference type="eggNOG" id="COG0261">
    <property type="taxonomic scope" value="Bacteria"/>
</dbReference>
<dbReference type="HOGENOM" id="CLU_061463_3_3_6"/>
<dbReference type="OrthoDB" id="9813334at2"/>
<dbReference type="Proteomes" id="UP000000753">
    <property type="component" value="Chromosome"/>
</dbReference>
<dbReference type="GO" id="GO:0005737">
    <property type="term" value="C:cytoplasm"/>
    <property type="evidence" value="ECO:0007669"/>
    <property type="project" value="UniProtKB-ARBA"/>
</dbReference>
<dbReference type="GO" id="GO:1990904">
    <property type="term" value="C:ribonucleoprotein complex"/>
    <property type="evidence" value="ECO:0007669"/>
    <property type="project" value="UniProtKB-KW"/>
</dbReference>
<dbReference type="GO" id="GO:0005840">
    <property type="term" value="C:ribosome"/>
    <property type="evidence" value="ECO:0007669"/>
    <property type="project" value="UniProtKB-KW"/>
</dbReference>
<dbReference type="GO" id="GO:0019843">
    <property type="term" value="F:rRNA binding"/>
    <property type="evidence" value="ECO:0007669"/>
    <property type="project" value="UniProtKB-UniRule"/>
</dbReference>
<dbReference type="GO" id="GO:0003735">
    <property type="term" value="F:structural constituent of ribosome"/>
    <property type="evidence" value="ECO:0007669"/>
    <property type="project" value="InterPro"/>
</dbReference>
<dbReference type="GO" id="GO:0006412">
    <property type="term" value="P:translation"/>
    <property type="evidence" value="ECO:0007669"/>
    <property type="project" value="UniProtKB-UniRule"/>
</dbReference>
<dbReference type="HAMAP" id="MF_01363">
    <property type="entry name" value="Ribosomal_bL21"/>
    <property type="match status" value="1"/>
</dbReference>
<dbReference type="InterPro" id="IPR028909">
    <property type="entry name" value="bL21-like"/>
</dbReference>
<dbReference type="InterPro" id="IPR036164">
    <property type="entry name" value="bL21-like_sf"/>
</dbReference>
<dbReference type="InterPro" id="IPR001787">
    <property type="entry name" value="Ribosomal_bL21"/>
</dbReference>
<dbReference type="InterPro" id="IPR018258">
    <property type="entry name" value="Ribosomal_bL21_CS"/>
</dbReference>
<dbReference type="NCBIfam" id="TIGR00061">
    <property type="entry name" value="L21"/>
    <property type="match status" value="1"/>
</dbReference>
<dbReference type="PANTHER" id="PTHR21349">
    <property type="entry name" value="50S RIBOSOMAL PROTEIN L21"/>
    <property type="match status" value="1"/>
</dbReference>
<dbReference type="PANTHER" id="PTHR21349:SF0">
    <property type="entry name" value="LARGE RIBOSOMAL SUBUNIT PROTEIN BL21M"/>
    <property type="match status" value="1"/>
</dbReference>
<dbReference type="Pfam" id="PF00829">
    <property type="entry name" value="Ribosomal_L21p"/>
    <property type="match status" value="1"/>
</dbReference>
<dbReference type="SUPFAM" id="SSF141091">
    <property type="entry name" value="L21p-like"/>
    <property type="match status" value="1"/>
</dbReference>
<dbReference type="PROSITE" id="PS01169">
    <property type="entry name" value="RIBOSOMAL_L21"/>
    <property type="match status" value="1"/>
</dbReference>
<evidence type="ECO:0000255" key="1">
    <source>
        <dbReference type="HAMAP-Rule" id="MF_01363"/>
    </source>
</evidence>
<evidence type="ECO:0000305" key="2"/>
<accession>B8CSY5</accession>
<sequence>MYAVFQSGGKQHRVEAGHTVRLEKLEVATGETIEFDQVLLVADGETVHVGAPLVEGGKVVAEVVSHGRAEKVTIVKFRRRKHHDKKMGHRQWFTEVKITAISA</sequence>
<keyword id="KW-0687">Ribonucleoprotein</keyword>
<keyword id="KW-0689">Ribosomal protein</keyword>
<keyword id="KW-0694">RNA-binding</keyword>
<keyword id="KW-0699">rRNA-binding</keyword>
<name>RL21_SHEPW</name>
<gene>
    <name evidence="1" type="primary">rplU</name>
    <name type="ordered locus">swp_4097</name>
</gene>
<organism>
    <name type="scientific">Shewanella piezotolerans (strain WP3 / JCM 13877)</name>
    <dbReference type="NCBI Taxonomy" id="225849"/>
    <lineage>
        <taxon>Bacteria</taxon>
        <taxon>Pseudomonadati</taxon>
        <taxon>Pseudomonadota</taxon>
        <taxon>Gammaproteobacteria</taxon>
        <taxon>Alteromonadales</taxon>
        <taxon>Shewanellaceae</taxon>
        <taxon>Shewanella</taxon>
    </lineage>
</organism>